<proteinExistence type="inferred from homology"/>
<protein>
    <recommendedName>
        <fullName evidence="2">Probable biotin-dependent acyl-coenzyme A carboxylase beta3 subunit</fullName>
        <ecNumber evidence="1">2.1.3.-</ecNumber>
    </recommendedName>
</protein>
<comment type="function">
    <text evidence="1">Component of a biotin-dependent acyl-CoA carboxylase complex. This subunit transfers the CO2 from carboxybiotin to the CoA ester substrate.</text>
</comment>
<comment type="subunit">
    <text evidence="1">The biotin-dependent acyl-CoA carboxylase complex is composed of an AccA protein, which contains the biotin carboxylase (BC) and biotin carboxyl carrier protein (BCCP) domains, and an AccD protein, which contains the carboxyl transferase (CT) domain.</text>
</comment>
<comment type="similarity">
    <text evidence="5">Belongs to the AccD/PCCB family.</text>
</comment>
<organism>
    <name type="scientific">Mycobacterium bovis (strain ATCC BAA-935 / AF2122/97)</name>
    <dbReference type="NCBI Taxonomy" id="233413"/>
    <lineage>
        <taxon>Bacteria</taxon>
        <taxon>Bacillati</taxon>
        <taxon>Actinomycetota</taxon>
        <taxon>Actinomycetes</taxon>
        <taxon>Mycobacteriales</taxon>
        <taxon>Mycobacteriaceae</taxon>
        <taxon>Mycobacterium</taxon>
        <taxon>Mycobacterium tuberculosis complex</taxon>
    </lineage>
</organism>
<dbReference type="EC" id="2.1.3.-" evidence="1"/>
<dbReference type="EMBL" id="LT708304">
    <property type="protein sequence ID" value="SIT99526.1"/>
    <property type="molecule type" value="Genomic_DNA"/>
</dbReference>
<dbReference type="RefSeq" id="NP_854585.1">
    <property type="nucleotide sequence ID" value="NC_002945.3"/>
</dbReference>
<dbReference type="RefSeq" id="WP_003404691.1">
    <property type="nucleotide sequence ID" value="NC_002945.4"/>
</dbReference>
<dbReference type="SMR" id="P63406"/>
<dbReference type="KEGG" id="mbo:BQ2027_MB0928C"/>
<dbReference type="PATRIC" id="fig|233413.5.peg.1009"/>
<dbReference type="Proteomes" id="UP000001419">
    <property type="component" value="Chromosome"/>
</dbReference>
<dbReference type="GO" id="GO:0009317">
    <property type="term" value="C:acetyl-CoA carboxylase complex"/>
    <property type="evidence" value="ECO:0007669"/>
    <property type="project" value="InterPro"/>
</dbReference>
<dbReference type="GO" id="GO:0003989">
    <property type="term" value="F:acetyl-CoA carboxylase activity"/>
    <property type="evidence" value="ECO:0007669"/>
    <property type="project" value="InterPro"/>
</dbReference>
<dbReference type="GO" id="GO:0016740">
    <property type="term" value="F:transferase activity"/>
    <property type="evidence" value="ECO:0007669"/>
    <property type="project" value="UniProtKB-KW"/>
</dbReference>
<dbReference type="GO" id="GO:0006633">
    <property type="term" value="P:fatty acid biosynthetic process"/>
    <property type="evidence" value="ECO:0007669"/>
    <property type="project" value="InterPro"/>
</dbReference>
<dbReference type="GO" id="GO:2001295">
    <property type="term" value="P:malonyl-CoA biosynthetic process"/>
    <property type="evidence" value="ECO:0007669"/>
    <property type="project" value="TreeGrafter"/>
</dbReference>
<dbReference type="FunFam" id="3.90.226.10:FF:000108">
    <property type="entry name" value="Acetyl-coenzyme A carboxylase carboxyl transferase subunit beta"/>
    <property type="match status" value="1"/>
</dbReference>
<dbReference type="Gene3D" id="3.90.226.10">
    <property type="entry name" value="2-enoyl-CoA Hydratase, Chain A, domain 1"/>
    <property type="match status" value="2"/>
</dbReference>
<dbReference type="InterPro" id="IPR034733">
    <property type="entry name" value="AcCoA_carboxyl_beta"/>
</dbReference>
<dbReference type="InterPro" id="IPR000438">
    <property type="entry name" value="Acetyl_CoA_COase_Trfase_b_su"/>
</dbReference>
<dbReference type="InterPro" id="IPR029045">
    <property type="entry name" value="ClpP/crotonase-like_dom_sf"/>
</dbReference>
<dbReference type="InterPro" id="IPR011763">
    <property type="entry name" value="COA_CT_C"/>
</dbReference>
<dbReference type="InterPro" id="IPR011762">
    <property type="entry name" value="COA_CT_N"/>
</dbReference>
<dbReference type="PANTHER" id="PTHR42995">
    <property type="entry name" value="ACETYL-COENZYME A CARBOXYLASE CARBOXYL TRANSFERASE SUBUNIT BETA, CHLOROPLASTIC"/>
    <property type="match status" value="1"/>
</dbReference>
<dbReference type="PANTHER" id="PTHR42995:SF5">
    <property type="entry name" value="ACETYL-COENZYME A CARBOXYLASE CARBOXYL TRANSFERASE SUBUNIT BETA, CHLOROPLASTIC"/>
    <property type="match status" value="1"/>
</dbReference>
<dbReference type="Pfam" id="PF01039">
    <property type="entry name" value="Carboxyl_trans"/>
    <property type="match status" value="1"/>
</dbReference>
<dbReference type="PRINTS" id="PR01070">
    <property type="entry name" value="ACCCTRFRASEB"/>
</dbReference>
<dbReference type="SUPFAM" id="SSF52096">
    <property type="entry name" value="ClpP/crotonase"/>
    <property type="match status" value="2"/>
</dbReference>
<dbReference type="PROSITE" id="PS50989">
    <property type="entry name" value="COA_CT_CTER"/>
    <property type="match status" value="1"/>
</dbReference>
<dbReference type="PROSITE" id="PS50980">
    <property type="entry name" value="COA_CT_NTER"/>
    <property type="match status" value="1"/>
</dbReference>
<sequence length="495" mass="51772">MSRITTDQLRHAVLDRGSFVSWDSEPLAVPVADSYARELAAARAATGADESVQTGEGRVFGRRVAVVACEFDFLGGSIGVAAAERITAAVERATAERLPLLASPSSGGTRMQEGTVAFLQMVKIAAAIQLHNQARLPYLVYLRHPTTGGVFASWGSLGHLTVAEPGALIGFLGPRVYELLYGDPFPSGVQTAENLRRHGIIDGVVALDRLRPMLDRALTVLIDAPEPLPAPQTPAPVPDVPTWDSVVASRRPDRPGVRQLLRHGATDRVLLSGTDQGEAATTLLALARFGGQPTVVLGQQRAVGGGGSTVGPAALREARRGMALAAELCLPLVLVIDAAGPALSAAAEQGGLAGQIAHCLAELVTLDTPTVSILLGQGSGGPALAMLPADRVLAALHGWLAPLPPEGASAIVFRDTAHAAELAAAQGIRSADLLKSGIVDTIVPEYPDAADEPIEFALRLSNAIAAEVHALRKIPAPERLATRLQRYRRIGLPRD</sequence>
<name>ACCD3_MYCBO</name>
<keyword id="KW-1185">Reference proteome</keyword>
<keyword id="KW-0808">Transferase</keyword>
<accession>P63406</accession>
<accession>A0A1R3XWS2</accession>
<accession>Q10561</accession>
<accession>X2BG50</accession>
<gene>
    <name type="primary">accD3</name>
    <name type="ordered locus">BQ2027_MB0928C</name>
</gene>
<reference key="1">
    <citation type="journal article" date="2003" name="Proc. Natl. Acad. Sci. U.S.A.">
        <title>The complete genome sequence of Mycobacterium bovis.</title>
        <authorList>
            <person name="Garnier T."/>
            <person name="Eiglmeier K."/>
            <person name="Camus J.-C."/>
            <person name="Medina N."/>
            <person name="Mansoor H."/>
            <person name="Pryor M."/>
            <person name="Duthoy S."/>
            <person name="Grondin S."/>
            <person name="Lacroix C."/>
            <person name="Monsempe C."/>
            <person name="Simon S."/>
            <person name="Harris B."/>
            <person name="Atkin R."/>
            <person name="Doggett J."/>
            <person name="Mayes R."/>
            <person name="Keating L."/>
            <person name="Wheeler P.R."/>
            <person name="Parkhill J."/>
            <person name="Barrell B.G."/>
            <person name="Cole S.T."/>
            <person name="Gordon S.V."/>
            <person name="Hewinson R.G."/>
        </authorList>
    </citation>
    <scope>NUCLEOTIDE SEQUENCE [LARGE SCALE GENOMIC DNA]</scope>
    <source>
        <strain>ATCC BAA-935 / AF2122/97</strain>
    </source>
</reference>
<reference key="2">
    <citation type="journal article" date="2017" name="Genome Announc.">
        <title>Updated reference genome sequence and annotation of Mycobacterium bovis AF2122/97.</title>
        <authorList>
            <person name="Malone K.M."/>
            <person name="Farrell D."/>
            <person name="Stuber T.P."/>
            <person name="Schubert O.T."/>
            <person name="Aebersold R."/>
            <person name="Robbe-Austerman S."/>
            <person name="Gordon S.V."/>
        </authorList>
    </citation>
    <scope>NUCLEOTIDE SEQUENCE [LARGE SCALE GENOMIC DNA]</scope>
    <scope>GENOME REANNOTATION</scope>
    <source>
        <strain>ATCC BAA-935 / AF2122/97</strain>
    </source>
</reference>
<evidence type="ECO:0000250" key="1">
    <source>
        <dbReference type="UniProtKB" id="O53578"/>
    </source>
</evidence>
<evidence type="ECO:0000250" key="2">
    <source>
        <dbReference type="UniProtKB" id="P9WQH9"/>
    </source>
</evidence>
<evidence type="ECO:0000255" key="3">
    <source>
        <dbReference type="PROSITE-ProRule" id="PRU01136"/>
    </source>
</evidence>
<evidence type="ECO:0000255" key="4">
    <source>
        <dbReference type="PROSITE-ProRule" id="PRU01137"/>
    </source>
</evidence>
<evidence type="ECO:0000305" key="5"/>
<feature type="chain" id="PRO_0000199774" description="Probable biotin-dependent acyl-coenzyme A carboxylase beta3 subunit">
    <location>
        <begin position="1"/>
        <end position="495"/>
    </location>
</feature>
<feature type="domain" description="CoA carboxyltransferase N-terminal" evidence="3">
    <location>
        <begin position="1"/>
        <end position="236"/>
    </location>
</feature>
<feature type="domain" description="CoA carboxyltransferase C-terminal" evidence="4">
    <location>
        <begin position="242"/>
        <end position="470"/>
    </location>
</feature>